<name>TPIS_XENLA</name>
<sequence length="248" mass="26762">MSPRKFFVGGNWKMNGDKKSLGELINTLNSGKMNADTEVVCGAPAIYLDFARQKLDAKIALSAQNCYKVAKGAFTGEISPAMIKDCGATWVILGHSERRHVFGECDELIGQKVAHALSEGIGVIACIGEKLDQREAGITEKVVFEQTKAIADNVKDWSKVVLAYEPVWAIGTGKTATPEQAQEVHKKLREWVKTNVSEGVAQSVRIIYGGSVTGGTCRELAGQPDIDGFLVGGASLKPEFIEIINAKH</sequence>
<keyword id="KW-0963">Cytoplasm</keyword>
<keyword id="KW-0312">Gluconeogenesis</keyword>
<keyword id="KW-0324">Glycolysis</keyword>
<keyword id="KW-0413">Isomerase</keyword>
<keyword id="KW-0456">Lyase</keyword>
<keyword id="KW-1185">Reference proteome</keyword>
<proteinExistence type="evidence at transcript level"/>
<evidence type="ECO:0000250" key="1"/>
<evidence type="ECO:0000250" key="2">
    <source>
        <dbReference type="UniProtKB" id="P00939"/>
    </source>
</evidence>
<evidence type="ECO:0000255" key="3">
    <source>
        <dbReference type="PROSITE-ProRule" id="PRU10127"/>
    </source>
</evidence>
<evidence type="ECO:0000305" key="4"/>
<feature type="initiator methionine" description="Removed" evidence="1">
    <location>
        <position position="1"/>
    </location>
</feature>
<feature type="chain" id="PRO_0000345142" description="Triosephosphate isomerase">
    <location>
        <begin position="2"/>
        <end position="248"/>
    </location>
</feature>
<feature type="active site" description="Electrophile" evidence="3">
    <location>
        <position position="95"/>
    </location>
</feature>
<feature type="active site" description="Proton acceptor" evidence="3">
    <location>
        <position position="165"/>
    </location>
</feature>
<feature type="binding site" evidence="3">
    <location>
        <position position="11"/>
    </location>
    <ligand>
        <name>substrate</name>
    </ligand>
</feature>
<feature type="binding site" evidence="3">
    <location>
        <position position="13"/>
    </location>
    <ligand>
        <name>substrate</name>
    </ligand>
</feature>
<organism>
    <name type="scientific">Xenopus laevis</name>
    <name type="common">African clawed frog</name>
    <dbReference type="NCBI Taxonomy" id="8355"/>
    <lineage>
        <taxon>Eukaryota</taxon>
        <taxon>Metazoa</taxon>
        <taxon>Chordata</taxon>
        <taxon>Craniata</taxon>
        <taxon>Vertebrata</taxon>
        <taxon>Euteleostomi</taxon>
        <taxon>Amphibia</taxon>
        <taxon>Batrachia</taxon>
        <taxon>Anura</taxon>
        <taxon>Pipoidea</taxon>
        <taxon>Pipidae</taxon>
        <taxon>Xenopodinae</taxon>
        <taxon>Xenopus</taxon>
        <taxon>Xenopus</taxon>
    </lineage>
</organism>
<dbReference type="EC" id="5.3.1.1" evidence="3"/>
<dbReference type="EC" id="4.2.3.3" evidence="2"/>
<dbReference type="EMBL" id="BC046864">
    <property type="protein sequence ID" value="AAH46864.1"/>
    <property type="molecule type" value="mRNA"/>
</dbReference>
<dbReference type="RefSeq" id="NP_001080476.1">
    <property type="nucleotide sequence ID" value="NM_001087007.1"/>
</dbReference>
<dbReference type="SMR" id="Q7ZWN5"/>
<dbReference type="BioGRID" id="98410">
    <property type="interactions" value="1"/>
</dbReference>
<dbReference type="DNASU" id="380168"/>
<dbReference type="GeneID" id="380168"/>
<dbReference type="KEGG" id="xla:380168"/>
<dbReference type="AGR" id="Xenbase:XB-GENE-866354"/>
<dbReference type="CTD" id="380168"/>
<dbReference type="Xenbase" id="XB-GENE-866354">
    <property type="gene designation" value="tpi1.S"/>
</dbReference>
<dbReference type="OMA" id="IEKNGTM"/>
<dbReference type="OrthoDB" id="6715177at2759"/>
<dbReference type="UniPathway" id="UPA00109">
    <property type="reaction ID" value="UER00189"/>
</dbReference>
<dbReference type="UniPathway" id="UPA00138"/>
<dbReference type="Proteomes" id="UP000186698">
    <property type="component" value="Chromosome 7S"/>
</dbReference>
<dbReference type="Bgee" id="380168">
    <property type="expression patterns" value="Expressed in oocyte and 19 other cell types or tissues"/>
</dbReference>
<dbReference type="GO" id="GO:0005829">
    <property type="term" value="C:cytosol"/>
    <property type="evidence" value="ECO:0000318"/>
    <property type="project" value="GO_Central"/>
</dbReference>
<dbReference type="GO" id="GO:0008929">
    <property type="term" value="F:methylglyoxal synthase activity"/>
    <property type="evidence" value="ECO:0000250"/>
    <property type="project" value="UniProtKB"/>
</dbReference>
<dbReference type="GO" id="GO:0042803">
    <property type="term" value="F:protein homodimerization activity"/>
    <property type="evidence" value="ECO:0000250"/>
    <property type="project" value="UniProtKB"/>
</dbReference>
<dbReference type="GO" id="GO:0004807">
    <property type="term" value="F:triose-phosphate isomerase activity"/>
    <property type="evidence" value="ECO:0000250"/>
    <property type="project" value="UniProtKB"/>
</dbReference>
<dbReference type="GO" id="GO:0006094">
    <property type="term" value="P:gluconeogenesis"/>
    <property type="evidence" value="ECO:0000318"/>
    <property type="project" value="GO_Central"/>
</dbReference>
<dbReference type="GO" id="GO:0046166">
    <property type="term" value="P:glyceraldehyde-3-phosphate biosynthetic process"/>
    <property type="evidence" value="ECO:0000250"/>
    <property type="project" value="UniProtKB"/>
</dbReference>
<dbReference type="GO" id="GO:0019563">
    <property type="term" value="P:glycerol catabolic process"/>
    <property type="evidence" value="ECO:0000318"/>
    <property type="project" value="GO_Central"/>
</dbReference>
<dbReference type="GO" id="GO:0006096">
    <property type="term" value="P:glycolytic process"/>
    <property type="evidence" value="ECO:0000318"/>
    <property type="project" value="GO_Central"/>
</dbReference>
<dbReference type="GO" id="GO:0019242">
    <property type="term" value="P:methylglyoxal biosynthetic process"/>
    <property type="evidence" value="ECO:0000250"/>
    <property type="project" value="UniProtKB"/>
</dbReference>
<dbReference type="CDD" id="cd00311">
    <property type="entry name" value="TIM"/>
    <property type="match status" value="1"/>
</dbReference>
<dbReference type="FunFam" id="3.20.20.70:FF:000025">
    <property type="entry name" value="Triosephosphate isomerase"/>
    <property type="match status" value="1"/>
</dbReference>
<dbReference type="Gene3D" id="3.20.20.70">
    <property type="entry name" value="Aldolase class I"/>
    <property type="match status" value="1"/>
</dbReference>
<dbReference type="HAMAP" id="MF_00147_B">
    <property type="entry name" value="TIM_B"/>
    <property type="match status" value="1"/>
</dbReference>
<dbReference type="InterPro" id="IPR013785">
    <property type="entry name" value="Aldolase_TIM"/>
</dbReference>
<dbReference type="InterPro" id="IPR035990">
    <property type="entry name" value="TIM_sf"/>
</dbReference>
<dbReference type="InterPro" id="IPR022896">
    <property type="entry name" value="TrioseP_Isoase_bac/euk"/>
</dbReference>
<dbReference type="InterPro" id="IPR000652">
    <property type="entry name" value="Triosephosphate_isomerase"/>
</dbReference>
<dbReference type="InterPro" id="IPR020861">
    <property type="entry name" value="Triosephosphate_isomerase_AS"/>
</dbReference>
<dbReference type="NCBIfam" id="TIGR00419">
    <property type="entry name" value="tim"/>
    <property type="match status" value="1"/>
</dbReference>
<dbReference type="PANTHER" id="PTHR21139">
    <property type="entry name" value="TRIOSEPHOSPHATE ISOMERASE"/>
    <property type="match status" value="1"/>
</dbReference>
<dbReference type="PANTHER" id="PTHR21139:SF2">
    <property type="entry name" value="TRIOSEPHOSPHATE ISOMERASE"/>
    <property type="match status" value="1"/>
</dbReference>
<dbReference type="Pfam" id="PF00121">
    <property type="entry name" value="TIM"/>
    <property type="match status" value="1"/>
</dbReference>
<dbReference type="SUPFAM" id="SSF51351">
    <property type="entry name" value="Triosephosphate isomerase (TIM)"/>
    <property type="match status" value="1"/>
</dbReference>
<dbReference type="PROSITE" id="PS00171">
    <property type="entry name" value="TIM_1"/>
    <property type="match status" value="1"/>
</dbReference>
<dbReference type="PROSITE" id="PS51440">
    <property type="entry name" value="TIM_2"/>
    <property type="match status" value="1"/>
</dbReference>
<accession>Q7ZWN5</accession>
<reference key="1">
    <citation type="submission" date="2003-02" db="EMBL/GenBank/DDBJ databases">
        <authorList>
            <consortium name="NIH - Xenopus Gene Collection (XGC) project"/>
        </authorList>
    </citation>
    <scope>NUCLEOTIDE SEQUENCE [LARGE SCALE MRNA]</scope>
    <source>
        <tissue>Embryo</tissue>
    </source>
</reference>
<gene>
    <name type="primary">tpi1</name>
    <name type="synonym">tpi</name>
</gene>
<protein>
    <recommendedName>
        <fullName>Triosephosphate isomerase</fullName>
        <shortName>TIM</shortName>
        <ecNumber evidence="3">5.3.1.1</ecNumber>
    </recommendedName>
    <alternativeName>
        <fullName evidence="2">Methylglyoxal synthase</fullName>
        <ecNumber evidence="2">4.2.3.3</ecNumber>
    </alternativeName>
    <alternativeName>
        <fullName>Triose-phosphate isomerase</fullName>
    </alternativeName>
</protein>
<comment type="function">
    <text evidence="2">Triosephosphate isomerase is an extremely efficient metabolic enzyme that catalyzes the interconversion between dihydroxyacetone phosphate (DHAP) and D-glyceraldehyde-3-phosphate (G3P) in glycolysis and gluconeogenesis.</text>
</comment>
<comment type="function">
    <text evidence="2">It is also responsible for the non-negligible production of methylglyoxal a reactive cytotoxic side-product that modifies and can alter proteins, DNA and lipids.</text>
</comment>
<comment type="catalytic activity">
    <reaction evidence="2">
        <text>dihydroxyacetone phosphate = methylglyoxal + phosphate</text>
        <dbReference type="Rhea" id="RHEA:17937"/>
        <dbReference type="ChEBI" id="CHEBI:17158"/>
        <dbReference type="ChEBI" id="CHEBI:43474"/>
        <dbReference type="ChEBI" id="CHEBI:57642"/>
        <dbReference type="EC" id="4.2.3.3"/>
    </reaction>
</comment>
<comment type="catalytic activity">
    <reaction evidence="3">
        <text>D-glyceraldehyde 3-phosphate = dihydroxyacetone phosphate</text>
        <dbReference type="Rhea" id="RHEA:18585"/>
        <dbReference type="ChEBI" id="CHEBI:57642"/>
        <dbReference type="ChEBI" id="CHEBI:59776"/>
        <dbReference type="EC" id="5.3.1.1"/>
    </reaction>
</comment>
<comment type="pathway">
    <text evidence="3">Carbohydrate degradation; glycolysis; D-glyceraldehyde 3-phosphate from glycerone phosphate: step 1/1.</text>
</comment>
<comment type="pathway">
    <text evidence="3">Carbohydrate biosynthesis; gluconeogenesis.</text>
</comment>
<comment type="subunit">
    <text evidence="3">Homodimer.</text>
</comment>
<comment type="subcellular location">
    <subcellularLocation>
        <location evidence="3">Cytoplasm</location>
    </subcellularLocation>
</comment>
<comment type="similarity">
    <text evidence="4">Belongs to the triosephosphate isomerase family.</text>
</comment>